<dbReference type="EMBL" id="CP001620">
    <property type="protein sequence ID" value="ACR18517.1"/>
    <property type="molecule type" value="Genomic_DNA"/>
</dbReference>
<dbReference type="RefSeq" id="WP_012732404.1">
    <property type="nucleotide sequence ID" value="NC_012704.1"/>
</dbReference>
<dbReference type="SMR" id="C4LL12"/>
<dbReference type="STRING" id="645127.ckrop_1796"/>
<dbReference type="GeneID" id="92726595"/>
<dbReference type="KEGG" id="ckp:ckrop_1796"/>
<dbReference type="eggNOG" id="COG0096">
    <property type="taxonomic scope" value="Bacteria"/>
</dbReference>
<dbReference type="HOGENOM" id="CLU_098428_0_1_11"/>
<dbReference type="OrthoDB" id="9802617at2"/>
<dbReference type="Proteomes" id="UP000001473">
    <property type="component" value="Chromosome"/>
</dbReference>
<dbReference type="GO" id="GO:1990904">
    <property type="term" value="C:ribonucleoprotein complex"/>
    <property type="evidence" value="ECO:0007669"/>
    <property type="project" value="UniProtKB-KW"/>
</dbReference>
<dbReference type="GO" id="GO:0005840">
    <property type="term" value="C:ribosome"/>
    <property type="evidence" value="ECO:0007669"/>
    <property type="project" value="UniProtKB-KW"/>
</dbReference>
<dbReference type="GO" id="GO:0019843">
    <property type="term" value="F:rRNA binding"/>
    <property type="evidence" value="ECO:0007669"/>
    <property type="project" value="UniProtKB-UniRule"/>
</dbReference>
<dbReference type="GO" id="GO:0003735">
    <property type="term" value="F:structural constituent of ribosome"/>
    <property type="evidence" value="ECO:0007669"/>
    <property type="project" value="InterPro"/>
</dbReference>
<dbReference type="GO" id="GO:0006412">
    <property type="term" value="P:translation"/>
    <property type="evidence" value="ECO:0007669"/>
    <property type="project" value="UniProtKB-UniRule"/>
</dbReference>
<dbReference type="FunFam" id="3.30.1370.30:FF:000002">
    <property type="entry name" value="30S ribosomal protein S8"/>
    <property type="match status" value="1"/>
</dbReference>
<dbReference type="FunFam" id="3.30.1490.10:FF:000001">
    <property type="entry name" value="30S ribosomal protein S8"/>
    <property type="match status" value="1"/>
</dbReference>
<dbReference type="Gene3D" id="3.30.1370.30">
    <property type="match status" value="1"/>
</dbReference>
<dbReference type="Gene3D" id="3.30.1490.10">
    <property type="match status" value="1"/>
</dbReference>
<dbReference type="HAMAP" id="MF_01302_B">
    <property type="entry name" value="Ribosomal_uS8_B"/>
    <property type="match status" value="1"/>
</dbReference>
<dbReference type="InterPro" id="IPR000630">
    <property type="entry name" value="Ribosomal_uS8"/>
</dbReference>
<dbReference type="InterPro" id="IPR035987">
    <property type="entry name" value="Ribosomal_uS8_sf"/>
</dbReference>
<dbReference type="NCBIfam" id="NF001109">
    <property type="entry name" value="PRK00136.1"/>
    <property type="match status" value="1"/>
</dbReference>
<dbReference type="PANTHER" id="PTHR11758">
    <property type="entry name" value="40S RIBOSOMAL PROTEIN S15A"/>
    <property type="match status" value="1"/>
</dbReference>
<dbReference type="Pfam" id="PF00410">
    <property type="entry name" value="Ribosomal_S8"/>
    <property type="match status" value="1"/>
</dbReference>
<dbReference type="SUPFAM" id="SSF56047">
    <property type="entry name" value="Ribosomal protein S8"/>
    <property type="match status" value="1"/>
</dbReference>
<gene>
    <name evidence="1" type="primary">rpsH</name>
    <name type="ordered locus">ckrop_1796</name>
</gene>
<accession>C4LL12</accession>
<proteinExistence type="inferred from homology"/>
<reference key="1">
    <citation type="journal article" date="2008" name="J. Biotechnol.">
        <title>Ultrafast pyrosequencing of Corynebacterium kroppenstedtii DSM44385 revealed insights into the physiology of a lipophilic corynebacterium that lacks mycolic acids.</title>
        <authorList>
            <person name="Tauch A."/>
            <person name="Schneider J."/>
            <person name="Szczepanowski R."/>
            <person name="Tilker A."/>
            <person name="Viehoever P."/>
            <person name="Gartemann K.-H."/>
            <person name="Arnold W."/>
            <person name="Blom J."/>
            <person name="Brinkrolf K."/>
            <person name="Brune I."/>
            <person name="Goetker S."/>
            <person name="Weisshaar B."/>
            <person name="Goesmann A."/>
            <person name="Droege M."/>
            <person name="Puehler A."/>
        </authorList>
    </citation>
    <scope>NUCLEOTIDE SEQUENCE [LARGE SCALE GENOMIC DNA]</scope>
    <source>
        <strain>DSM 44385 / JCM 11950 / CIP 105744 / CCUG 35717</strain>
    </source>
</reference>
<feature type="chain" id="PRO_1000214247" description="Small ribosomal subunit protein uS8">
    <location>
        <begin position="1"/>
        <end position="132"/>
    </location>
</feature>
<organism>
    <name type="scientific">Corynebacterium kroppenstedtii (strain DSM 44385 / JCM 11950 / CIP 105744 / CCUG 35717)</name>
    <dbReference type="NCBI Taxonomy" id="645127"/>
    <lineage>
        <taxon>Bacteria</taxon>
        <taxon>Bacillati</taxon>
        <taxon>Actinomycetota</taxon>
        <taxon>Actinomycetes</taxon>
        <taxon>Mycobacteriales</taxon>
        <taxon>Corynebacteriaceae</taxon>
        <taxon>Corynebacterium</taxon>
    </lineage>
</organism>
<protein>
    <recommendedName>
        <fullName evidence="1">Small ribosomal subunit protein uS8</fullName>
    </recommendedName>
    <alternativeName>
        <fullName evidence="2">30S ribosomal protein S8</fullName>
    </alternativeName>
</protein>
<name>RS8_CORK4</name>
<sequence length="132" mass="14241">MTMTDPIADMLSRVRNASNAYHDTVSMPSSNLKVHIAEILKQEGYIADFTVEDAKVGKTLTIELKYGSTRQRSLSGVRRVSSPGLRVYAKSTNLPQVLGGLGVAIISTSQGLLTDRQASEKGVGGEVLAYVW</sequence>
<comment type="function">
    <text evidence="1">One of the primary rRNA binding proteins, it binds directly to 16S rRNA central domain where it helps coordinate assembly of the platform of the 30S subunit.</text>
</comment>
<comment type="subunit">
    <text evidence="1">Part of the 30S ribosomal subunit. Contacts proteins S5 and S12.</text>
</comment>
<comment type="similarity">
    <text evidence="1">Belongs to the universal ribosomal protein uS8 family.</text>
</comment>
<evidence type="ECO:0000255" key="1">
    <source>
        <dbReference type="HAMAP-Rule" id="MF_01302"/>
    </source>
</evidence>
<evidence type="ECO:0000305" key="2"/>
<keyword id="KW-1185">Reference proteome</keyword>
<keyword id="KW-0687">Ribonucleoprotein</keyword>
<keyword id="KW-0689">Ribosomal protein</keyword>
<keyword id="KW-0694">RNA-binding</keyword>
<keyword id="KW-0699">rRNA-binding</keyword>